<proteinExistence type="inferred from homology"/>
<reference key="1">
    <citation type="journal article" date="1998" name="Curr. Genet.">
        <title>A ribosomal protein gene cluster is encoded in the mitochondrial DNA of Dictyostelium discoideum: UGA termination codons and similarity of gene order to Acanthamoeba castellanii.</title>
        <authorList>
            <person name="Iwamoto M."/>
            <person name="Pi M."/>
            <person name="Kurihara M."/>
            <person name="Morio T."/>
            <person name="Tanaka Y."/>
        </authorList>
    </citation>
    <scope>NUCLEOTIDE SEQUENCE [GENOMIC DNA]</scope>
    <source>
        <strain>AX3</strain>
    </source>
</reference>
<reference key="2">
    <citation type="journal article" date="2000" name="Mol. Gen. Genet.">
        <title>The mitochondrial DNA of Dictyostelium discoideum: complete sequence, gene content and genome organization.</title>
        <authorList>
            <person name="Ogawa S."/>
            <person name="Yoshino R."/>
            <person name="Angata K."/>
            <person name="Iwamoto M."/>
            <person name="Pi M."/>
            <person name="Kuroe K."/>
            <person name="Matsuo K."/>
            <person name="Morio T."/>
            <person name="Urushihara H."/>
            <person name="Yanagisawa K."/>
            <person name="Tanaka Y."/>
        </authorList>
    </citation>
    <scope>NUCLEOTIDE SEQUENCE [LARGE SCALE GENOMIC DNA]</scope>
    <source>
        <strain>AX3</strain>
    </source>
</reference>
<sequence length="144" mass="16671">MKIPNRQKFTKNHKRNLITKETRKTGLVLGNYGIKATETGYLKMKQMERIKGDLVKKLKDNMDIYFNFYPLFGLTNKGTARMGAGKGEVSEWYVLVKKGSIVVEFIKSRMTAGAMQKVIRYSANKWPIKVRMTQIKQGLYEKKI</sequence>
<keyword id="KW-0496">Mitochondrion</keyword>
<keyword id="KW-1185">Reference proteome</keyword>
<keyword id="KW-0687">Ribonucleoprotein</keyword>
<keyword id="KW-0689">Ribosomal protein</keyword>
<geneLocation type="mitochondrion"/>
<organism>
    <name type="scientific">Dictyostelium discoideum</name>
    <name type="common">Social amoeba</name>
    <dbReference type="NCBI Taxonomy" id="44689"/>
    <lineage>
        <taxon>Eukaryota</taxon>
        <taxon>Amoebozoa</taxon>
        <taxon>Evosea</taxon>
        <taxon>Eumycetozoa</taxon>
        <taxon>Dictyostelia</taxon>
        <taxon>Dictyosteliales</taxon>
        <taxon>Dictyosteliaceae</taxon>
        <taxon>Dictyostelium</taxon>
    </lineage>
</organism>
<protein>
    <recommendedName>
        <fullName evidence="1">Large ribosomal subunit protein uL16m</fullName>
    </recommendedName>
    <alternativeName>
        <fullName>60S ribosomal protein L16, mitochondrial</fullName>
    </alternativeName>
</protein>
<gene>
    <name type="primary">mrpl16</name>
    <name type="synonym">rpl16</name>
    <name type="ORF">DDB_G0294042</name>
</gene>
<feature type="chain" id="PRO_0000312378" description="Large ribosomal subunit protein uL16m">
    <location>
        <begin position="1"/>
        <end position="144"/>
    </location>
</feature>
<name>RM16_DICDI</name>
<dbReference type="EMBL" id="D63523">
    <property type="protein sequence ID" value="BAA23569.1"/>
    <property type="molecule type" value="Genomic_DNA"/>
</dbReference>
<dbReference type="EMBL" id="AB000109">
    <property type="protein sequence ID" value="BAA78077.1"/>
    <property type="molecule type" value="Genomic_DNA"/>
</dbReference>
<dbReference type="PIR" id="T43774">
    <property type="entry name" value="T43774"/>
</dbReference>
<dbReference type="RefSeq" id="NP_050095.1">
    <property type="nucleotide sequence ID" value="NC_000895.1"/>
</dbReference>
<dbReference type="SMR" id="O21032"/>
<dbReference type="FunCoup" id="O21032">
    <property type="interactions" value="19"/>
</dbReference>
<dbReference type="STRING" id="44689.O21032"/>
<dbReference type="GeneID" id="2193921"/>
<dbReference type="KEGG" id="ddi:DidioMp28"/>
<dbReference type="dictyBase" id="DDB_G0294042">
    <property type="gene designation" value="mrpl16"/>
</dbReference>
<dbReference type="VEuPathDB" id="AmoebaDB:DidioMp28"/>
<dbReference type="InParanoid" id="O21032"/>
<dbReference type="PhylomeDB" id="O21032"/>
<dbReference type="PRO" id="PR:O21032"/>
<dbReference type="Proteomes" id="UP000002195">
    <property type="component" value="Mitochondrion"/>
</dbReference>
<dbReference type="GO" id="GO:0005762">
    <property type="term" value="C:mitochondrial large ribosomal subunit"/>
    <property type="evidence" value="ECO:0000318"/>
    <property type="project" value="GO_Central"/>
</dbReference>
<dbReference type="GO" id="GO:0019843">
    <property type="term" value="F:rRNA binding"/>
    <property type="evidence" value="ECO:0000318"/>
    <property type="project" value="GO_Central"/>
</dbReference>
<dbReference type="GO" id="GO:0003735">
    <property type="term" value="F:structural constituent of ribosome"/>
    <property type="evidence" value="ECO:0000318"/>
    <property type="project" value="GO_Central"/>
</dbReference>
<dbReference type="GO" id="GO:0032543">
    <property type="term" value="P:mitochondrial translation"/>
    <property type="evidence" value="ECO:0000318"/>
    <property type="project" value="GO_Central"/>
</dbReference>
<dbReference type="CDD" id="cd01433">
    <property type="entry name" value="Ribosomal_L16_L10e"/>
    <property type="match status" value="1"/>
</dbReference>
<dbReference type="Gene3D" id="3.90.1170.10">
    <property type="entry name" value="Ribosomal protein L10e/L16"/>
    <property type="match status" value="1"/>
</dbReference>
<dbReference type="InterPro" id="IPR047873">
    <property type="entry name" value="Ribosomal_uL16"/>
</dbReference>
<dbReference type="InterPro" id="IPR000114">
    <property type="entry name" value="Ribosomal_uL16_bact-type"/>
</dbReference>
<dbReference type="InterPro" id="IPR020798">
    <property type="entry name" value="Ribosomal_uL16_CS"/>
</dbReference>
<dbReference type="InterPro" id="IPR016180">
    <property type="entry name" value="Ribosomal_uL16_dom"/>
</dbReference>
<dbReference type="InterPro" id="IPR036920">
    <property type="entry name" value="Ribosomal_uL16_sf"/>
</dbReference>
<dbReference type="PANTHER" id="PTHR12220">
    <property type="entry name" value="50S/60S RIBOSOMAL PROTEIN L16"/>
    <property type="match status" value="1"/>
</dbReference>
<dbReference type="PANTHER" id="PTHR12220:SF13">
    <property type="entry name" value="LARGE RIBOSOMAL SUBUNIT PROTEIN UL16M"/>
    <property type="match status" value="1"/>
</dbReference>
<dbReference type="Pfam" id="PF00252">
    <property type="entry name" value="Ribosomal_L16"/>
    <property type="match status" value="1"/>
</dbReference>
<dbReference type="SUPFAM" id="SSF54686">
    <property type="entry name" value="Ribosomal protein L16p/L10e"/>
    <property type="match status" value="1"/>
</dbReference>
<dbReference type="PROSITE" id="PS00701">
    <property type="entry name" value="RIBOSOMAL_L16_2"/>
    <property type="match status" value="1"/>
</dbReference>
<comment type="subcellular location">
    <subcellularLocation>
        <location>Mitochondrion</location>
    </subcellularLocation>
</comment>
<comment type="similarity">
    <text evidence="1">Belongs to the universal ribosomal protein uL16 family.</text>
</comment>
<evidence type="ECO:0000305" key="1"/>
<accession>O21032</accession>